<gene>
    <name evidence="1" type="primary">rlmH</name>
    <name type="ordered locus">YpsIP31758_2948</name>
</gene>
<organism>
    <name type="scientific">Yersinia pseudotuberculosis serotype O:1b (strain IP 31758)</name>
    <dbReference type="NCBI Taxonomy" id="349747"/>
    <lineage>
        <taxon>Bacteria</taxon>
        <taxon>Pseudomonadati</taxon>
        <taxon>Pseudomonadota</taxon>
        <taxon>Gammaproteobacteria</taxon>
        <taxon>Enterobacterales</taxon>
        <taxon>Yersiniaceae</taxon>
        <taxon>Yersinia</taxon>
    </lineage>
</organism>
<proteinExistence type="inferred from homology"/>
<evidence type="ECO:0000255" key="1">
    <source>
        <dbReference type="HAMAP-Rule" id="MF_00658"/>
    </source>
</evidence>
<sequence>MKLQLVAVGTKMPDWVQTGFIEYLRRFPKDMPFELAEIPAGKRGKNADIKRILEKEGELMLAAVGKNNRIVTLDIPGTPWETPQLAQQLERWKQDGRDVSLLIGGPEGLAPACKAAAEQSWSLSPLTLPHPLVRVLVAESLYRAWSITTNHPYHRE</sequence>
<accession>A7FKY2</accession>
<comment type="function">
    <text evidence="1">Specifically methylates the pseudouridine at position 1915 (m3Psi1915) in 23S rRNA.</text>
</comment>
<comment type="catalytic activity">
    <reaction evidence="1">
        <text>pseudouridine(1915) in 23S rRNA + S-adenosyl-L-methionine = N(3)-methylpseudouridine(1915) in 23S rRNA + S-adenosyl-L-homocysteine + H(+)</text>
        <dbReference type="Rhea" id="RHEA:42752"/>
        <dbReference type="Rhea" id="RHEA-COMP:10221"/>
        <dbReference type="Rhea" id="RHEA-COMP:10222"/>
        <dbReference type="ChEBI" id="CHEBI:15378"/>
        <dbReference type="ChEBI" id="CHEBI:57856"/>
        <dbReference type="ChEBI" id="CHEBI:59789"/>
        <dbReference type="ChEBI" id="CHEBI:65314"/>
        <dbReference type="ChEBI" id="CHEBI:74486"/>
        <dbReference type="EC" id="2.1.1.177"/>
    </reaction>
</comment>
<comment type="subunit">
    <text evidence="1">Homodimer.</text>
</comment>
<comment type="subcellular location">
    <subcellularLocation>
        <location evidence="1">Cytoplasm</location>
    </subcellularLocation>
</comment>
<comment type="similarity">
    <text evidence="1">Belongs to the RNA methyltransferase RlmH family.</text>
</comment>
<name>RLMH_YERP3</name>
<feature type="chain" id="PRO_1000061857" description="Ribosomal RNA large subunit methyltransferase H">
    <location>
        <begin position="1"/>
        <end position="156"/>
    </location>
</feature>
<feature type="binding site" evidence="1">
    <location>
        <position position="73"/>
    </location>
    <ligand>
        <name>S-adenosyl-L-methionine</name>
        <dbReference type="ChEBI" id="CHEBI:59789"/>
    </ligand>
</feature>
<feature type="binding site" evidence="1">
    <location>
        <position position="104"/>
    </location>
    <ligand>
        <name>S-adenosyl-L-methionine</name>
        <dbReference type="ChEBI" id="CHEBI:59789"/>
    </ligand>
</feature>
<feature type="binding site" evidence="1">
    <location>
        <begin position="123"/>
        <end position="128"/>
    </location>
    <ligand>
        <name>S-adenosyl-L-methionine</name>
        <dbReference type="ChEBI" id="CHEBI:59789"/>
    </ligand>
</feature>
<dbReference type="EC" id="2.1.1.177" evidence="1"/>
<dbReference type="EMBL" id="CP000720">
    <property type="protein sequence ID" value="ABS45903.1"/>
    <property type="molecule type" value="Genomic_DNA"/>
</dbReference>
<dbReference type="RefSeq" id="WP_002210328.1">
    <property type="nucleotide sequence ID" value="NC_009708.1"/>
</dbReference>
<dbReference type="SMR" id="A7FKY2"/>
<dbReference type="GeneID" id="57976090"/>
<dbReference type="KEGG" id="ypi:YpsIP31758_2948"/>
<dbReference type="HOGENOM" id="CLU_100552_1_0_6"/>
<dbReference type="Proteomes" id="UP000002412">
    <property type="component" value="Chromosome"/>
</dbReference>
<dbReference type="GO" id="GO:0005737">
    <property type="term" value="C:cytoplasm"/>
    <property type="evidence" value="ECO:0007669"/>
    <property type="project" value="UniProtKB-SubCell"/>
</dbReference>
<dbReference type="GO" id="GO:0070038">
    <property type="term" value="F:rRNA (pseudouridine-N3-)-methyltransferase activity"/>
    <property type="evidence" value="ECO:0007669"/>
    <property type="project" value="UniProtKB-UniRule"/>
</dbReference>
<dbReference type="CDD" id="cd18081">
    <property type="entry name" value="RlmH-like"/>
    <property type="match status" value="1"/>
</dbReference>
<dbReference type="FunFam" id="3.40.1280.10:FF:000004">
    <property type="entry name" value="Ribosomal RNA large subunit methyltransferase H"/>
    <property type="match status" value="1"/>
</dbReference>
<dbReference type="Gene3D" id="3.40.1280.10">
    <property type="match status" value="1"/>
</dbReference>
<dbReference type="HAMAP" id="MF_00658">
    <property type="entry name" value="23SrRNA_methyltr_H"/>
    <property type="match status" value="1"/>
</dbReference>
<dbReference type="InterPro" id="IPR029028">
    <property type="entry name" value="Alpha/beta_knot_MTases"/>
</dbReference>
<dbReference type="InterPro" id="IPR003742">
    <property type="entry name" value="RlmH-like"/>
</dbReference>
<dbReference type="InterPro" id="IPR029026">
    <property type="entry name" value="tRNA_m1G_MTases_N"/>
</dbReference>
<dbReference type="NCBIfam" id="NF000984">
    <property type="entry name" value="PRK00103.1-1"/>
    <property type="match status" value="1"/>
</dbReference>
<dbReference type="NCBIfam" id="NF000986">
    <property type="entry name" value="PRK00103.1-4"/>
    <property type="match status" value="1"/>
</dbReference>
<dbReference type="NCBIfam" id="TIGR00246">
    <property type="entry name" value="tRNA_RlmH_YbeA"/>
    <property type="match status" value="1"/>
</dbReference>
<dbReference type="PANTHER" id="PTHR33603">
    <property type="entry name" value="METHYLTRANSFERASE"/>
    <property type="match status" value="1"/>
</dbReference>
<dbReference type="PANTHER" id="PTHR33603:SF1">
    <property type="entry name" value="RIBOSOMAL RNA LARGE SUBUNIT METHYLTRANSFERASE H"/>
    <property type="match status" value="1"/>
</dbReference>
<dbReference type="Pfam" id="PF02590">
    <property type="entry name" value="SPOUT_MTase"/>
    <property type="match status" value="1"/>
</dbReference>
<dbReference type="PIRSF" id="PIRSF004505">
    <property type="entry name" value="MT_bac"/>
    <property type="match status" value="1"/>
</dbReference>
<dbReference type="SUPFAM" id="SSF75217">
    <property type="entry name" value="alpha/beta knot"/>
    <property type="match status" value="1"/>
</dbReference>
<reference key="1">
    <citation type="journal article" date="2007" name="PLoS Genet.">
        <title>The complete genome sequence of Yersinia pseudotuberculosis IP31758, the causative agent of Far East scarlet-like fever.</title>
        <authorList>
            <person name="Eppinger M."/>
            <person name="Rosovitz M.J."/>
            <person name="Fricke W.F."/>
            <person name="Rasko D.A."/>
            <person name="Kokorina G."/>
            <person name="Fayolle C."/>
            <person name="Lindler L.E."/>
            <person name="Carniel E."/>
            <person name="Ravel J."/>
        </authorList>
    </citation>
    <scope>NUCLEOTIDE SEQUENCE [LARGE SCALE GENOMIC DNA]</scope>
    <source>
        <strain>IP 31758</strain>
    </source>
</reference>
<protein>
    <recommendedName>
        <fullName evidence="1">Ribosomal RNA large subunit methyltransferase H</fullName>
        <ecNumber evidence="1">2.1.1.177</ecNumber>
    </recommendedName>
    <alternativeName>
        <fullName evidence="1">23S rRNA (pseudouridine1915-N3)-methyltransferase</fullName>
    </alternativeName>
    <alternativeName>
        <fullName evidence="1">23S rRNA m3Psi1915 methyltransferase</fullName>
    </alternativeName>
    <alternativeName>
        <fullName evidence="1">rRNA (pseudouridine-N3-)-methyltransferase RlmH</fullName>
    </alternativeName>
</protein>
<keyword id="KW-0963">Cytoplasm</keyword>
<keyword id="KW-0489">Methyltransferase</keyword>
<keyword id="KW-0698">rRNA processing</keyword>
<keyword id="KW-0949">S-adenosyl-L-methionine</keyword>
<keyword id="KW-0808">Transferase</keyword>